<feature type="chain" id="PRO_1000083674" description="Protein ApaG">
    <location>
        <begin position="1"/>
        <end position="125"/>
    </location>
</feature>
<feature type="domain" description="ApaG" evidence="1">
    <location>
        <begin position="1"/>
        <end position="125"/>
    </location>
</feature>
<proteinExistence type="inferred from homology"/>
<sequence length="125" mass="14126">MIEQPRICVQVHSIYVETQSIPEEERFVFAYTVTVRNLGRSNVQLLGRYWLITNSNGRQTEVQGEGVIGEQPLILPGNEFQYTSGAVLETPLGTMEGHYEMIDHLGQAFRTVIPVFRLAIPALIH</sequence>
<accession>Q1C0H6</accession>
<protein>
    <recommendedName>
        <fullName evidence="1">Protein ApaG</fullName>
    </recommendedName>
</protein>
<reference key="1">
    <citation type="journal article" date="2006" name="J. Bacteriol.">
        <title>Complete genome sequence of Yersinia pestis strains Antiqua and Nepal516: evidence of gene reduction in an emerging pathogen.</title>
        <authorList>
            <person name="Chain P.S.G."/>
            <person name="Hu P."/>
            <person name="Malfatti S.A."/>
            <person name="Radnedge L."/>
            <person name="Larimer F."/>
            <person name="Vergez L.M."/>
            <person name="Worsham P."/>
            <person name="Chu M.C."/>
            <person name="Andersen G.L."/>
        </authorList>
    </citation>
    <scope>NUCLEOTIDE SEQUENCE [LARGE SCALE GENOMIC DNA]</scope>
    <source>
        <strain>Antiqua</strain>
    </source>
</reference>
<dbReference type="EMBL" id="CP000308">
    <property type="protein sequence ID" value="ABG16046.1"/>
    <property type="molecule type" value="Genomic_DNA"/>
</dbReference>
<dbReference type="RefSeq" id="WP_002210491.1">
    <property type="nucleotide sequence ID" value="NZ_CP009906.1"/>
</dbReference>
<dbReference type="SMR" id="Q1C0H6"/>
<dbReference type="GeneID" id="57974119"/>
<dbReference type="KEGG" id="ypa:YPA_4085"/>
<dbReference type="Proteomes" id="UP000001971">
    <property type="component" value="Chromosome"/>
</dbReference>
<dbReference type="GO" id="GO:0070987">
    <property type="term" value="P:error-free translesion synthesis"/>
    <property type="evidence" value="ECO:0007669"/>
    <property type="project" value="TreeGrafter"/>
</dbReference>
<dbReference type="Gene3D" id="2.60.40.1470">
    <property type="entry name" value="ApaG domain"/>
    <property type="match status" value="1"/>
</dbReference>
<dbReference type="HAMAP" id="MF_00791">
    <property type="entry name" value="ApaG"/>
    <property type="match status" value="1"/>
</dbReference>
<dbReference type="InterPro" id="IPR007474">
    <property type="entry name" value="ApaG_domain"/>
</dbReference>
<dbReference type="InterPro" id="IPR036767">
    <property type="entry name" value="ApaG_sf"/>
</dbReference>
<dbReference type="InterPro" id="IPR023065">
    <property type="entry name" value="Uncharacterised_ApaG"/>
</dbReference>
<dbReference type="NCBIfam" id="NF003967">
    <property type="entry name" value="PRK05461.1"/>
    <property type="match status" value="1"/>
</dbReference>
<dbReference type="PANTHER" id="PTHR14289">
    <property type="entry name" value="F-BOX ONLY PROTEIN 3"/>
    <property type="match status" value="1"/>
</dbReference>
<dbReference type="PANTHER" id="PTHR14289:SF16">
    <property type="entry name" value="POLYMERASE DELTA-INTERACTING PROTEIN 2"/>
    <property type="match status" value="1"/>
</dbReference>
<dbReference type="Pfam" id="PF04379">
    <property type="entry name" value="DUF525"/>
    <property type="match status" value="1"/>
</dbReference>
<dbReference type="SUPFAM" id="SSF110069">
    <property type="entry name" value="ApaG-like"/>
    <property type="match status" value="1"/>
</dbReference>
<dbReference type="PROSITE" id="PS51087">
    <property type="entry name" value="APAG"/>
    <property type="match status" value="1"/>
</dbReference>
<gene>
    <name evidence="1" type="primary">apaG</name>
    <name type="ordered locus">YPA_4085</name>
</gene>
<evidence type="ECO:0000255" key="1">
    <source>
        <dbReference type="HAMAP-Rule" id="MF_00791"/>
    </source>
</evidence>
<name>APAG_YERPA</name>
<organism>
    <name type="scientific">Yersinia pestis bv. Antiqua (strain Antiqua)</name>
    <dbReference type="NCBI Taxonomy" id="360102"/>
    <lineage>
        <taxon>Bacteria</taxon>
        <taxon>Pseudomonadati</taxon>
        <taxon>Pseudomonadota</taxon>
        <taxon>Gammaproteobacteria</taxon>
        <taxon>Enterobacterales</taxon>
        <taxon>Yersiniaceae</taxon>
        <taxon>Yersinia</taxon>
    </lineage>
</organism>